<name>RLME_BORRA</name>
<proteinExistence type="inferred from homology"/>
<feature type="chain" id="PRO_1000215448" description="Ribosomal RNA large subunit methyltransferase E">
    <location>
        <begin position="1"/>
        <end position="193"/>
    </location>
</feature>
<feature type="active site" description="Proton acceptor" evidence="1">
    <location>
        <position position="147"/>
    </location>
</feature>
<feature type="binding site" evidence="1">
    <location>
        <position position="48"/>
    </location>
    <ligand>
        <name>S-adenosyl-L-methionine</name>
        <dbReference type="ChEBI" id="CHEBI:59789"/>
    </ligand>
</feature>
<feature type="binding site" evidence="1">
    <location>
        <position position="50"/>
    </location>
    <ligand>
        <name>S-adenosyl-L-methionine</name>
        <dbReference type="ChEBI" id="CHEBI:59789"/>
    </ligand>
</feature>
<feature type="binding site" evidence="1">
    <location>
        <position position="67"/>
    </location>
    <ligand>
        <name>S-adenosyl-L-methionine</name>
        <dbReference type="ChEBI" id="CHEBI:59789"/>
    </ligand>
</feature>
<feature type="binding site" evidence="1">
    <location>
        <position position="85"/>
    </location>
    <ligand>
        <name>S-adenosyl-L-methionine</name>
        <dbReference type="ChEBI" id="CHEBI:59789"/>
    </ligand>
</feature>
<feature type="binding site" evidence="1">
    <location>
        <position position="107"/>
    </location>
    <ligand>
        <name>S-adenosyl-L-methionine</name>
        <dbReference type="ChEBI" id="CHEBI:59789"/>
    </ligand>
</feature>
<comment type="function">
    <text evidence="1">Specifically methylates the uridine in position 2552 of 23S rRNA at the 2'-O position of the ribose in the fully assembled 50S ribosomal subunit.</text>
</comment>
<comment type="catalytic activity">
    <reaction evidence="1">
        <text>uridine(2552) in 23S rRNA + S-adenosyl-L-methionine = 2'-O-methyluridine(2552) in 23S rRNA + S-adenosyl-L-homocysteine + H(+)</text>
        <dbReference type="Rhea" id="RHEA:42720"/>
        <dbReference type="Rhea" id="RHEA-COMP:10202"/>
        <dbReference type="Rhea" id="RHEA-COMP:10203"/>
        <dbReference type="ChEBI" id="CHEBI:15378"/>
        <dbReference type="ChEBI" id="CHEBI:57856"/>
        <dbReference type="ChEBI" id="CHEBI:59789"/>
        <dbReference type="ChEBI" id="CHEBI:65315"/>
        <dbReference type="ChEBI" id="CHEBI:74478"/>
        <dbReference type="EC" id="2.1.1.166"/>
    </reaction>
</comment>
<comment type="subcellular location">
    <subcellularLocation>
        <location evidence="1">Cytoplasm</location>
    </subcellularLocation>
</comment>
<comment type="similarity">
    <text evidence="1">Belongs to the class I-like SAM-binding methyltransferase superfamily. RNA methyltransferase RlmE family.</text>
</comment>
<organism>
    <name type="scientific">Borrelia recurrentis (strain A1)</name>
    <dbReference type="NCBI Taxonomy" id="412418"/>
    <lineage>
        <taxon>Bacteria</taxon>
        <taxon>Pseudomonadati</taxon>
        <taxon>Spirochaetota</taxon>
        <taxon>Spirochaetia</taxon>
        <taxon>Spirochaetales</taxon>
        <taxon>Borreliaceae</taxon>
        <taxon>Borrelia</taxon>
    </lineage>
</organism>
<gene>
    <name evidence="1" type="primary">rlmE</name>
    <name evidence="1" type="synonym">ftsJ</name>
    <name evidence="1" type="synonym">rrmJ</name>
    <name type="ordered locus">BRE_320</name>
</gene>
<evidence type="ECO:0000255" key="1">
    <source>
        <dbReference type="HAMAP-Rule" id="MF_01547"/>
    </source>
</evidence>
<accession>B5RRD2</accession>
<dbReference type="EC" id="2.1.1.166" evidence="1"/>
<dbReference type="EMBL" id="CP000993">
    <property type="protein sequence ID" value="ACH94566.1"/>
    <property type="molecule type" value="Genomic_DNA"/>
</dbReference>
<dbReference type="RefSeq" id="WP_012538079.1">
    <property type="nucleotide sequence ID" value="NZ_CP169983.1"/>
</dbReference>
<dbReference type="SMR" id="B5RRD2"/>
<dbReference type="KEGG" id="bre:BRE_320"/>
<dbReference type="HOGENOM" id="CLU_009422_4_4_12"/>
<dbReference type="Proteomes" id="UP000000612">
    <property type="component" value="Chromosome"/>
</dbReference>
<dbReference type="GO" id="GO:0005737">
    <property type="term" value="C:cytoplasm"/>
    <property type="evidence" value="ECO:0007669"/>
    <property type="project" value="UniProtKB-SubCell"/>
</dbReference>
<dbReference type="GO" id="GO:0008650">
    <property type="term" value="F:rRNA (uridine-2'-O-)-methyltransferase activity"/>
    <property type="evidence" value="ECO:0007669"/>
    <property type="project" value="UniProtKB-UniRule"/>
</dbReference>
<dbReference type="Gene3D" id="3.40.50.150">
    <property type="entry name" value="Vaccinia Virus protein VP39"/>
    <property type="match status" value="1"/>
</dbReference>
<dbReference type="HAMAP" id="MF_01547">
    <property type="entry name" value="RNA_methyltr_E"/>
    <property type="match status" value="1"/>
</dbReference>
<dbReference type="InterPro" id="IPR050082">
    <property type="entry name" value="RNA_methyltr_RlmE"/>
</dbReference>
<dbReference type="InterPro" id="IPR002877">
    <property type="entry name" value="RNA_MeTrfase_FtsJ_dom"/>
</dbReference>
<dbReference type="InterPro" id="IPR015507">
    <property type="entry name" value="rRNA-MeTfrase_E"/>
</dbReference>
<dbReference type="InterPro" id="IPR029063">
    <property type="entry name" value="SAM-dependent_MTases_sf"/>
</dbReference>
<dbReference type="PANTHER" id="PTHR10920">
    <property type="entry name" value="RIBOSOMAL RNA METHYLTRANSFERASE"/>
    <property type="match status" value="1"/>
</dbReference>
<dbReference type="PANTHER" id="PTHR10920:SF18">
    <property type="entry name" value="RRNA METHYLTRANSFERASE 2, MITOCHONDRIAL"/>
    <property type="match status" value="1"/>
</dbReference>
<dbReference type="Pfam" id="PF01728">
    <property type="entry name" value="FtsJ"/>
    <property type="match status" value="1"/>
</dbReference>
<dbReference type="PIRSF" id="PIRSF005461">
    <property type="entry name" value="23S_rRNA_mtase"/>
    <property type="match status" value="1"/>
</dbReference>
<dbReference type="SUPFAM" id="SSF53335">
    <property type="entry name" value="S-adenosyl-L-methionine-dependent methyltransferases"/>
    <property type="match status" value="1"/>
</dbReference>
<keyword id="KW-0963">Cytoplasm</keyword>
<keyword id="KW-0489">Methyltransferase</keyword>
<keyword id="KW-0698">rRNA processing</keyword>
<keyword id="KW-0949">S-adenosyl-L-methionine</keyword>
<keyword id="KW-0808">Transferase</keyword>
<sequence length="193" mass="21956">MYNVFDEYSQKAKNEGYLARSVYKLIEIDKKFSLFSSGNILDIGASPGSFSQYAYANLKNGVLVAVDLNDVNLNFTSNFYFIKGNIYLDEVYQKIKIFSPYSLIVSDAAPSTTGNRLVDTSNSFNLNIRIFELACESLMRGGNLLIKVFQGGEEEQIFYKLKSCFRVVKKVRPKAVRKNSFEIYFLAKDFAKL</sequence>
<protein>
    <recommendedName>
        <fullName evidence="1">Ribosomal RNA large subunit methyltransferase E</fullName>
        <ecNumber evidence="1">2.1.1.166</ecNumber>
    </recommendedName>
    <alternativeName>
        <fullName evidence="1">23S rRNA Um2552 methyltransferase</fullName>
    </alternativeName>
    <alternativeName>
        <fullName evidence="1">rRNA (uridine-2'-O-)-methyltransferase</fullName>
    </alternativeName>
</protein>
<reference key="1">
    <citation type="journal article" date="2008" name="PLoS Genet.">
        <title>The genome of Borrelia recurrentis, the agent of deadly louse-borne relapsing fever, is a degraded subset of tick-borne Borrelia duttonii.</title>
        <authorList>
            <person name="Lescot M."/>
            <person name="Audic S."/>
            <person name="Robert C."/>
            <person name="Nguyen T.T."/>
            <person name="Blanc G."/>
            <person name="Cutler S.J."/>
            <person name="Wincker P."/>
            <person name="Couloux A."/>
            <person name="Claverie J.-M."/>
            <person name="Raoult D."/>
            <person name="Drancourt M."/>
        </authorList>
    </citation>
    <scope>NUCLEOTIDE SEQUENCE [LARGE SCALE GENOMIC DNA]</scope>
    <source>
        <strain>A1</strain>
    </source>
</reference>